<dbReference type="EMBL" id="CP000143">
    <property type="protein sequence ID" value="ABA80182.1"/>
    <property type="molecule type" value="Genomic_DNA"/>
</dbReference>
<dbReference type="RefSeq" id="WP_011338648.1">
    <property type="nucleotide sequence ID" value="NC_007493.2"/>
</dbReference>
<dbReference type="RefSeq" id="YP_354083.1">
    <property type="nucleotide sequence ID" value="NC_007493.2"/>
</dbReference>
<dbReference type="SMR" id="Q3IZ52"/>
<dbReference type="STRING" id="272943.RSP_0999"/>
<dbReference type="EnsemblBacteria" id="ABA80182">
    <property type="protein sequence ID" value="ABA80182"/>
    <property type="gene ID" value="RSP_0999"/>
</dbReference>
<dbReference type="GeneID" id="3720715"/>
<dbReference type="KEGG" id="rsp:RSP_0999"/>
<dbReference type="PATRIC" id="fig|272943.9.peg.2971"/>
<dbReference type="eggNOG" id="COG1678">
    <property type="taxonomic scope" value="Bacteria"/>
</dbReference>
<dbReference type="OrthoDB" id="9807486at2"/>
<dbReference type="PhylomeDB" id="Q3IZ52"/>
<dbReference type="Proteomes" id="UP000002703">
    <property type="component" value="Chromosome 1"/>
</dbReference>
<dbReference type="GO" id="GO:0005829">
    <property type="term" value="C:cytosol"/>
    <property type="evidence" value="ECO:0007669"/>
    <property type="project" value="TreeGrafter"/>
</dbReference>
<dbReference type="Gene3D" id="3.40.1740.10">
    <property type="entry name" value="VC0467-like"/>
    <property type="match status" value="1"/>
</dbReference>
<dbReference type="HAMAP" id="MF_00758">
    <property type="entry name" value="UPF0301"/>
    <property type="match status" value="1"/>
</dbReference>
<dbReference type="InterPro" id="IPR003774">
    <property type="entry name" value="AlgH-like"/>
</dbReference>
<dbReference type="NCBIfam" id="NF001268">
    <property type="entry name" value="PRK00228.1-4"/>
    <property type="match status" value="1"/>
</dbReference>
<dbReference type="PANTHER" id="PTHR30327">
    <property type="entry name" value="UNCHARACTERIZED PROTEIN YQGE"/>
    <property type="match status" value="1"/>
</dbReference>
<dbReference type="PANTHER" id="PTHR30327:SF1">
    <property type="entry name" value="UPF0301 PROTEIN YQGE"/>
    <property type="match status" value="1"/>
</dbReference>
<dbReference type="Pfam" id="PF02622">
    <property type="entry name" value="DUF179"/>
    <property type="match status" value="1"/>
</dbReference>
<dbReference type="SUPFAM" id="SSF143456">
    <property type="entry name" value="VC0467-like"/>
    <property type="match status" value="1"/>
</dbReference>
<organism>
    <name type="scientific">Cereibacter sphaeroides (strain ATCC 17023 / DSM 158 / JCM 6121 / CCUG 31486 / LMG 2827 / NBRC 12203 / NCIMB 8253 / ATH 2.4.1.)</name>
    <name type="common">Rhodobacter sphaeroides</name>
    <dbReference type="NCBI Taxonomy" id="272943"/>
    <lineage>
        <taxon>Bacteria</taxon>
        <taxon>Pseudomonadati</taxon>
        <taxon>Pseudomonadota</taxon>
        <taxon>Alphaproteobacteria</taxon>
        <taxon>Rhodobacterales</taxon>
        <taxon>Paracoccaceae</taxon>
        <taxon>Cereibacter</taxon>
    </lineage>
</organism>
<protein>
    <recommendedName>
        <fullName evidence="1">UPF0301 protein RHOS4_26140</fullName>
    </recommendedName>
</protein>
<keyword id="KW-1185">Reference proteome</keyword>
<reference key="1">
    <citation type="submission" date="2005-09" db="EMBL/GenBank/DDBJ databases">
        <title>Complete sequence of chromosome 1 of Rhodobacter sphaeroides 2.4.1.</title>
        <authorList>
            <person name="Copeland A."/>
            <person name="Lucas S."/>
            <person name="Lapidus A."/>
            <person name="Barry K."/>
            <person name="Detter J.C."/>
            <person name="Glavina T."/>
            <person name="Hammon N."/>
            <person name="Israni S."/>
            <person name="Pitluck S."/>
            <person name="Richardson P."/>
            <person name="Mackenzie C."/>
            <person name="Choudhary M."/>
            <person name="Larimer F."/>
            <person name="Hauser L.J."/>
            <person name="Land M."/>
            <person name="Donohue T.J."/>
            <person name="Kaplan S."/>
        </authorList>
    </citation>
    <scope>NUCLEOTIDE SEQUENCE [LARGE SCALE GENOMIC DNA]</scope>
    <source>
        <strain>ATCC 17023 / DSM 158 / JCM 6121 / CCUG 31486 / LMG 2827 / NBRC 12203 / NCIMB 8253 / ATH 2.4.1.</strain>
    </source>
</reference>
<sequence>MDLSGSLLIAMPSMADPRFERSLVLICAHSPDGAMGLVVNKPVEDLSFAGMLEQLNIPRAPNGRDIRVHLGGPMERGRGFVLHSPDYMSVGATMLVSGKFGMTATVDILEALARGQGPSSALMALGYSGWGPGQLEAEVQRNDWLTAEAPSELVFSDDDPGKWTGMLRHMGIDPLTLSSTAGHA</sequence>
<comment type="similarity">
    <text evidence="1">Belongs to the UPF0301 (AlgH) family.</text>
</comment>
<proteinExistence type="inferred from homology"/>
<accession>Q3IZ52</accession>
<name>Y2614_CERS4</name>
<gene>
    <name type="ordered locus">RHOS4_26140</name>
    <name type="ORF">RSP_0999</name>
</gene>
<feature type="chain" id="PRO_0000258866" description="UPF0301 protein RHOS4_26140">
    <location>
        <begin position="1"/>
        <end position="184"/>
    </location>
</feature>
<evidence type="ECO:0000255" key="1">
    <source>
        <dbReference type="HAMAP-Rule" id="MF_00758"/>
    </source>
</evidence>